<comment type="function">
    <text evidence="1">Binds directly to 23S rRNA. The L1 stalk is quite mobile in the ribosome, and is involved in E site tRNA release.</text>
</comment>
<comment type="function">
    <text evidence="1">Protein L1 is also a translational repressor protein, it controls the translation of the L11 operon by binding to its mRNA.</text>
</comment>
<comment type="subunit">
    <text evidence="1">Part of the 50S ribosomal subunit.</text>
</comment>
<comment type="similarity">
    <text evidence="1">Belongs to the universal ribosomal protein uL1 family.</text>
</comment>
<reference key="1">
    <citation type="submission" date="2008-02" db="EMBL/GenBank/DDBJ databases">
        <title>Complete sequence of Yersinia pseudotuberculosis YPIII.</title>
        <authorList>
            <consortium name="US DOE Joint Genome Institute"/>
            <person name="Copeland A."/>
            <person name="Lucas S."/>
            <person name="Lapidus A."/>
            <person name="Glavina del Rio T."/>
            <person name="Dalin E."/>
            <person name="Tice H."/>
            <person name="Bruce D."/>
            <person name="Goodwin L."/>
            <person name="Pitluck S."/>
            <person name="Munk A.C."/>
            <person name="Brettin T."/>
            <person name="Detter J.C."/>
            <person name="Han C."/>
            <person name="Tapia R."/>
            <person name="Schmutz J."/>
            <person name="Larimer F."/>
            <person name="Land M."/>
            <person name="Hauser L."/>
            <person name="Challacombe J.F."/>
            <person name="Green L."/>
            <person name="Lindler L.E."/>
            <person name="Nikolich M.P."/>
            <person name="Richardson P."/>
        </authorList>
    </citation>
    <scope>NUCLEOTIDE SEQUENCE [LARGE SCALE GENOMIC DNA]</scope>
    <source>
        <strain>YPIII</strain>
    </source>
</reference>
<name>RL1_YERPY</name>
<organism>
    <name type="scientific">Yersinia pseudotuberculosis serotype O:3 (strain YPIII)</name>
    <dbReference type="NCBI Taxonomy" id="502800"/>
    <lineage>
        <taxon>Bacteria</taxon>
        <taxon>Pseudomonadati</taxon>
        <taxon>Pseudomonadota</taxon>
        <taxon>Gammaproteobacteria</taxon>
        <taxon>Enterobacterales</taxon>
        <taxon>Yersiniaceae</taxon>
        <taxon>Yersinia</taxon>
    </lineage>
</organism>
<gene>
    <name evidence="1" type="primary">rplA</name>
    <name type="ordered locus">YPK_0336</name>
</gene>
<protein>
    <recommendedName>
        <fullName evidence="1">Large ribosomal subunit protein uL1</fullName>
    </recommendedName>
    <alternativeName>
        <fullName evidence="2">50S ribosomal protein L1</fullName>
    </alternativeName>
</protein>
<proteinExistence type="inferred from homology"/>
<dbReference type="EMBL" id="CP000950">
    <property type="protein sequence ID" value="ACA66646.1"/>
    <property type="molecule type" value="Genomic_DNA"/>
</dbReference>
<dbReference type="RefSeq" id="WP_002210673.1">
    <property type="nucleotide sequence ID" value="NZ_CP009792.1"/>
</dbReference>
<dbReference type="SMR" id="B1JJJ5"/>
<dbReference type="GeneID" id="57974968"/>
<dbReference type="KEGG" id="ypy:YPK_0336"/>
<dbReference type="PATRIC" id="fig|502800.11.peg.939"/>
<dbReference type="GO" id="GO:0022625">
    <property type="term" value="C:cytosolic large ribosomal subunit"/>
    <property type="evidence" value="ECO:0007669"/>
    <property type="project" value="TreeGrafter"/>
</dbReference>
<dbReference type="GO" id="GO:0019843">
    <property type="term" value="F:rRNA binding"/>
    <property type="evidence" value="ECO:0007669"/>
    <property type="project" value="UniProtKB-UniRule"/>
</dbReference>
<dbReference type="GO" id="GO:0003735">
    <property type="term" value="F:structural constituent of ribosome"/>
    <property type="evidence" value="ECO:0007669"/>
    <property type="project" value="InterPro"/>
</dbReference>
<dbReference type="GO" id="GO:0000049">
    <property type="term" value="F:tRNA binding"/>
    <property type="evidence" value="ECO:0007669"/>
    <property type="project" value="UniProtKB-KW"/>
</dbReference>
<dbReference type="GO" id="GO:0006417">
    <property type="term" value="P:regulation of translation"/>
    <property type="evidence" value="ECO:0007669"/>
    <property type="project" value="UniProtKB-KW"/>
</dbReference>
<dbReference type="GO" id="GO:0006412">
    <property type="term" value="P:translation"/>
    <property type="evidence" value="ECO:0007669"/>
    <property type="project" value="UniProtKB-UniRule"/>
</dbReference>
<dbReference type="CDD" id="cd00403">
    <property type="entry name" value="Ribosomal_L1"/>
    <property type="match status" value="1"/>
</dbReference>
<dbReference type="FunFam" id="3.40.50.790:FF:000001">
    <property type="entry name" value="50S ribosomal protein L1"/>
    <property type="match status" value="1"/>
</dbReference>
<dbReference type="Gene3D" id="3.30.190.20">
    <property type="match status" value="1"/>
</dbReference>
<dbReference type="Gene3D" id="3.40.50.790">
    <property type="match status" value="1"/>
</dbReference>
<dbReference type="HAMAP" id="MF_01318_B">
    <property type="entry name" value="Ribosomal_uL1_B"/>
    <property type="match status" value="1"/>
</dbReference>
<dbReference type="InterPro" id="IPR005878">
    <property type="entry name" value="Ribosom_uL1_bac-type"/>
</dbReference>
<dbReference type="InterPro" id="IPR002143">
    <property type="entry name" value="Ribosomal_uL1"/>
</dbReference>
<dbReference type="InterPro" id="IPR023674">
    <property type="entry name" value="Ribosomal_uL1-like"/>
</dbReference>
<dbReference type="InterPro" id="IPR028364">
    <property type="entry name" value="Ribosomal_uL1/biogenesis"/>
</dbReference>
<dbReference type="InterPro" id="IPR016095">
    <property type="entry name" value="Ribosomal_uL1_3-a/b-sand"/>
</dbReference>
<dbReference type="InterPro" id="IPR023673">
    <property type="entry name" value="Ribosomal_uL1_CS"/>
</dbReference>
<dbReference type="NCBIfam" id="TIGR01169">
    <property type="entry name" value="rplA_bact"/>
    <property type="match status" value="1"/>
</dbReference>
<dbReference type="PANTHER" id="PTHR36427">
    <property type="entry name" value="54S RIBOSOMAL PROTEIN L1, MITOCHONDRIAL"/>
    <property type="match status" value="1"/>
</dbReference>
<dbReference type="PANTHER" id="PTHR36427:SF3">
    <property type="entry name" value="LARGE RIBOSOMAL SUBUNIT PROTEIN UL1M"/>
    <property type="match status" value="1"/>
</dbReference>
<dbReference type="Pfam" id="PF00687">
    <property type="entry name" value="Ribosomal_L1"/>
    <property type="match status" value="1"/>
</dbReference>
<dbReference type="PIRSF" id="PIRSF002155">
    <property type="entry name" value="Ribosomal_L1"/>
    <property type="match status" value="1"/>
</dbReference>
<dbReference type="SUPFAM" id="SSF56808">
    <property type="entry name" value="Ribosomal protein L1"/>
    <property type="match status" value="1"/>
</dbReference>
<dbReference type="PROSITE" id="PS01199">
    <property type="entry name" value="RIBOSOMAL_L1"/>
    <property type="match status" value="1"/>
</dbReference>
<keyword id="KW-0678">Repressor</keyword>
<keyword id="KW-0687">Ribonucleoprotein</keyword>
<keyword id="KW-0689">Ribosomal protein</keyword>
<keyword id="KW-0694">RNA-binding</keyword>
<keyword id="KW-0699">rRNA-binding</keyword>
<keyword id="KW-0810">Translation regulation</keyword>
<keyword id="KW-0820">tRNA-binding</keyword>
<feature type="chain" id="PRO_1000141488" description="Large ribosomal subunit protein uL1">
    <location>
        <begin position="1"/>
        <end position="234"/>
    </location>
</feature>
<sequence>MAKLTKRMRVIRDKVDVTKQYDINEAVALLKELATAKFVESVDVAVNLGIDARKSDQNVRGATVLPHGTGRSVRVAVFAQGANAEAAKEAGAELVGMDDLADQIKKGEMNFDVVIASPDAMRVVGQLGQILGPRGLMPNPKVGTVTPNVAEAVKNAKAGQVRYRNDKNGIIHTTIGKVDFDSDKLKENLESLVVALKKAKPATAKGIYIKKISLSTTMGAGVAIDQSGLTAVVN</sequence>
<accession>B1JJJ5</accession>
<evidence type="ECO:0000255" key="1">
    <source>
        <dbReference type="HAMAP-Rule" id="MF_01318"/>
    </source>
</evidence>
<evidence type="ECO:0000305" key="2"/>